<feature type="chain" id="PRO_0000102255" description="Glutaredoxin 4">
    <location>
        <begin position="1"/>
        <end position="107"/>
    </location>
</feature>
<feature type="domain" description="Glutaredoxin" evidence="2">
    <location>
        <begin position="4"/>
        <end position="106"/>
    </location>
</feature>
<feature type="binding site" evidence="1">
    <location>
        <position position="21"/>
    </location>
    <ligand>
        <name>glutathione</name>
        <dbReference type="ChEBI" id="CHEBI:57925"/>
    </ligand>
</feature>
<feature type="binding site" evidence="1">
    <location>
        <position position="29"/>
    </location>
    <ligand>
        <name>[2Fe-2S] cluster</name>
        <dbReference type="ChEBI" id="CHEBI:190135"/>
        <note>ligand shared between dimeric partners</note>
    </ligand>
</feature>
<feature type="binding site" evidence="1">
    <location>
        <position position="58"/>
    </location>
    <ligand>
        <name>glutathione</name>
        <dbReference type="ChEBI" id="CHEBI:57925"/>
    </ligand>
</feature>
<feature type="binding site" evidence="1">
    <location>
        <position position="70"/>
    </location>
    <ligand>
        <name>glutathione</name>
        <dbReference type="ChEBI" id="CHEBI:57925"/>
    </ligand>
</feature>
<feature type="binding site" evidence="1">
    <location>
        <begin position="83"/>
        <end position="84"/>
    </location>
    <ligand>
        <name>glutathione</name>
        <dbReference type="ChEBI" id="CHEBI:57925"/>
    </ligand>
</feature>
<reference key="1">
    <citation type="journal article" date="2002" name="Science">
        <title>50 million years of genomic stasis in endosymbiotic bacteria.</title>
        <authorList>
            <person name="Tamas I."/>
            <person name="Klasson L."/>
            <person name="Canbaeck B."/>
            <person name="Naeslund A.K."/>
            <person name="Eriksson A.-S."/>
            <person name="Wernegreen J.J."/>
            <person name="Sandstroem J.P."/>
            <person name="Moran N.A."/>
            <person name="Andersson S.G.E."/>
        </authorList>
    </citation>
    <scope>NUCLEOTIDE SEQUENCE [LARGE SCALE GENOMIC DNA]</scope>
    <source>
        <strain>Sg</strain>
    </source>
</reference>
<name>GLRX4_BUCAP</name>
<proteinExistence type="inferred from homology"/>
<keyword id="KW-0001">2Fe-2S</keyword>
<keyword id="KW-0963">Cytoplasm</keyword>
<keyword id="KW-0408">Iron</keyword>
<keyword id="KW-0411">Iron-sulfur</keyword>
<keyword id="KW-0479">Metal-binding</keyword>
<keyword id="KW-0676">Redox-active center</keyword>
<protein>
    <recommendedName>
        <fullName>Glutaredoxin 4</fullName>
        <shortName>Grx4</shortName>
    </recommendedName>
    <alternativeName>
        <fullName>Monothiol glutaredoxin</fullName>
    </alternativeName>
</protein>
<gene>
    <name type="primary">grxD</name>
    <name type="ordered locus">BUsg_181</name>
</gene>
<sequence length="107" mass="12055">MNVIEKIERQIKDNIILIYMKGTPQSPSCGFSAQAVQALSICGEKFAYVDILENLDIRKELPRYANWPTFPQLWIKGELIGGCSIILEMLENGELKKIISNAVLNSK</sequence>
<evidence type="ECO:0000250" key="1"/>
<evidence type="ECO:0000255" key="2">
    <source>
        <dbReference type="PROSITE-ProRule" id="PRU00686"/>
    </source>
</evidence>
<evidence type="ECO:0000305" key="3"/>
<accession>Q8K9V6</accession>
<organism>
    <name type="scientific">Buchnera aphidicola subsp. Schizaphis graminum (strain Sg)</name>
    <dbReference type="NCBI Taxonomy" id="198804"/>
    <lineage>
        <taxon>Bacteria</taxon>
        <taxon>Pseudomonadati</taxon>
        <taxon>Pseudomonadota</taxon>
        <taxon>Gammaproteobacteria</taxon>
        <taxon>Enterobacterales</taxon>
        <taxon>Erwiniaceae</taxon>
        <taxon>Buchnera</taxon>
    </lineage>
</organism>
<comment type="function">
    <text evidence="1">Monothiol glutaredoxin involved in the biogenesis of iron-sulfur clusters.</text>
</comment>
<comment type="subunit">
    <text evidence="1">Homodimer.</text>
</comment>
<comment type="subcellular location">
    <subcellularLocation>
        <location evidence="1">Cytoplasm</location>
    </subcellularLocation>
</comment>
<comment type="similarity">
    <text evidence="3">Belongs to the glutaredoxin family. Monothiol subfamily.</text>
</comment>
<dbReference type="EMBL" id="AE013218">
    <property type="protein sequence ID" value="AAM67746.1"/>
    <property type="molecule type" value="Genomic_DNA"/>
</dbReference>
<dbReference type="RefSeq" id="WP_011053713.1">
    <property type="nucleotide sequence ID" value="NC_004061.1"/>
</dbReference>
<dbReference type="SMR" id="Q8K9V6"/>
<dbReference type="STRING" id="198804.BUsg_181"/>
<dbReference type="GeneID" id="93003649"/>
<dbReference type="KEGG" id="bas:BUsg_181"/>
<dbReference type="eggNOG" id="COG0278">
    <property type="taxonomic scope" value="Bacteria"/>
</dbReference>
<dbReference type="HOGENOM" id="CLU_026126_2_1_6"/>
<dbReference type="Proteomes" id="UP000000416">
    <property type="component" value="Chromosome"/>
</dbReference>
<dbReference type="GO" id="GO:0005737">
    <property type="term" value="C:cytoplasm"/>
    <property type="evidence" value="ECO:0007669"/>
    <property type="project" value="UniProtKB-SubCell"/>
</dbReference>
<dbReference type="GO" id="GO:0051537">
    <property type="term" value="F:2 iron, 2 sulfur cluster binding"/>
    <property type="evidence" value="ECO:0007669"/>
    <property type="project" value="UniProtKB-KW"/>
</dbReference>
<dbReference type="GO" id="GO:0015036">
    <property type="term" value="F:disulfide oxidoreductase activity"/>
    <property type="evidence" value="ECO:0007669"/>
    <property type="project" value="InterPro"/>
</dbReference>
<dbReference type="GO" id="GO:0046872">
    <property type="term" value="F:metal ion binding"/>
    <property type="evidence" value="ECO:0007669"/>
    <property type="project" value="UniProtKB-KW"/>
</dbReference>
<dbReference type="CDD" id="cd03028">
    <property type="entry name" value="GRX_PICOT_like"/>
    <property type="match status" value="1"/>
</dbReference>
<dbReference type="Gene3D" id="3.40.30.10">
    <property type="entry name" value="Glutaredoxin"/>
    <property type="match status" value="1"/>
</dbReference>
<dbReference type="InterPro" id="IPR002109">
    <property type="entry name" value="Glutaredoxin"/>
</dbReference>
<dbReference type="InterPro" id="IPR033658">
    <property type="entry name" value="GRX_PICOT-like"/>
</dbReference>
<dbReference type="InterPro" id="IPR014434">
    <property type="entry name" value="Monothiol_GRX"/>
</dbReference>
<dbReference type="InterPro" id="IPR004480">
    <property type="entry name" value="Monothiol_GRX-rel"/>
</dbReference>
<dbReference type="InterPro" id="IPR036249">
    <property type="entry name" value="Thioredoxin-like_sf"/>
</dbReference>
<dbReference type="NCBIfam" id="TIGR00365">
    <property type="entry name" value="Grx4 family monothiol glutaredoxin"/>
    <property type="match status" value="1"/>
</dbReference>
<dbReference type="PANTHER" id="PTHR10293">
    <property type="entry name" value="GLUTAREDOXIN FAMILY MEMBER"/>
    <property type="match status" value="1"/>
</dbReference>
<dbReference type="PANTHER" id="PTHR10293:SF72">
    <property type="entry name" value="MONOTHIOL GLUTAREDOXIN-S14, CHLOROPLASTIC"/>
    <property type="match status" value="1"/>
</dbReference>
<dbReference type="Pfam" id="PF00462">
    <property type="entry name" value="Glutaredoxin"/>
    <property type="match status" value="1"/>
</dbReference>
<dbReference type="PIRSF" id="PIRSF005894">
    <property type="entry name" value="Monothiol_GRX"/>
    <property type="match status" value="1"/>
</dbReference>
<dbReference type="SUPFAM" id="SSF52833">
    <property type="entry name" value="Thioredoxin-like"/>
    <property type="match status" value="1"/>
</dbReference>
<dbReference type="PROSITE" id="PS51354">
    <property type="entry name" value="GLUTAREDOXIN_2"/>
    <property type="match status" value="1"/>
</dbReference>